<dbReference type="EMBL" id="AF343726">
    <property type="protein sequence ID" value="AAK83236.1"/>
    <property type="molecule type" value="mRNA"/>
</dbReference>
<dbReference type="EMBL" id="AY044228">
    <property type="protein sequence ID" value="AAK95814.1"/>
    <property type="molecule type" value="mRNA"/>
</dbReference>
<dbReference type="EMBL" id="AK039628">
    <property type="protein sequence ID" value="BAC30404.1"/>
    <property type="molecule type" value="mRNA"/>
</dbReference>
<dbReference type="EMBL" id="BC016531">
    <property type="protein sequence ID" value="AAH16531.1"/>
    <property type="molecule type" value="mRNA"/>
</dbReference>
<dbReference type="CCDS" id="CCDS23998.1"/>
<dbReference type="RefSeq" id="NP_444474.1">
    <property type="nucleotide sequence ID" value="NM_053244.5"/>
</dbReference>
<dbReference type="RefSeq" id="XP_006513139.1">
    <property type="nucleotide sequence ID" value="XM_006513076.5"/>
</dbReference>
<dbReference type="RefSeq" id="XP_006513140.1">
    <property type="nucleotide sequence ID" value="XM_006513077.5"/>
</dbReference>
<dbReference type="SMR" id="Q91V45"/>
<dbReference type="FunCoup" id="Q91V45">
    <property type="interactions" value="579"/>
</dbReference>
<dbReference type="STRING" id="10090.ENSMUSP00000040516"/>
<dbReference type="GuidetoPHARMACOLOGY" id="266"/>
<dbReference type="GlyCosmos" id="Q91V45">
    <property type="glycosylation" value="3 sites, No reported glycans"/>
</dbReference>
<dbReference type="GlyGen" id="Q91V45">
    <property type="glycosylation" value="4 sites"/>
</dbReference>
<dbReference type="iPTMnet" id="Q91V45"/>
<dbReference type="PhosphoSitePlus" id="Q91V45"/>
<dbReference type="PaxDb" id="10090-ENSMUSP00000040516"/>
<dbReference type="Antibodypedia" id="10260">
    <property type="antibodies" value="333 antibodies from 34 providers"/>
</dbReference>
<dbReference type="DNASU" id="114229"/>
<dbReference type="Ensembl" id="ENSMUST00000045529.3">
    <property type="protein sequence ID" value="ENSMUSP00000040516.3"/>
    <property type="gene ID" value="ENSMUSG00000035773.7"/>
</dbReference>
<dbReference type="GeneID" id="114229"/>
<dbReference type="KEGG" id="mmu:114229"/>
<dbReference type="UCSC" id="uc007gao.2">
    <property type="organism name" value="mouse"/>
</dbReference>
<dbReference type="AGR" id="MGI:2148793"/>
<dbReference type="CTD" id="84634"/>
<dbReference type="MGI" id="MGI:2148793">
    <property type="gene designation" value="Kiss1r"/>
</dbReference>
<dbReference type="VEuPathDB" id="HostDB:ENSMUSG00000035773"/>
<dbReference type="eggNOG" id="KOG3656">
    <property type="taxonomic scope" value="Eukaryota"/>
</dbReference>
<dbReference type="GeneTree" id="ENSGT00940000157017"/>
<dbReference type="HOGENOM" id="CLU_009579_6_4_1"/>
<dbReference type="InParanoid" id="Q91V45"/>
<dbReference type="OMA" id="LYQMGHP"/>
<dbReference type="OrthoDB" id="2132067at2759"/>
<dbReference type="PhylomeDB" id="Q91V45"/>
<dbReference type="TreeFam" id="TF315737"/>
<dbReference type="Reactome" id="R-MMU-375276">
    <property type="pathway name" value="Peptide ligand-binding receptors"/>
</dbReference>
<dbReference type="Reactome" id="R-MMU-416476">
    <property type="pathway name" value="G alpha (q) signalling events"/>
</dbReference>
<dbReference type="BioGRID-ORCS" id="114229">
    <property type="hits" value="5 hits in 78 CRISPR screens"/>
</dbReference>
<dbReference type="PRO" id="PR:Q91V45"/>
<dbReference type="Proteomes" id="UP000000589">
    <property type="component" value="Chromosome 10"/>
</dbReference>
<dbReference type="RNAct" id="Q91V45">
    <property type="molecule type" value="protein"/>
</dbReference>
<dbReference type="Bgee" id="ENSMUSG00000035773">
    <property type="expression patterns" value="Expressed in granulocyte and 62 other cell types or tissues"/>
</dbReference>
<dbReference type="ExpressionAtlas" id="Q91V45">
    <property type="expression patterns" value="baseline and differential"/>
</dbReference>
<dbReference type="GO" id="GO:0009986">
    <property type="term" value="C:cell surface"/>
    <property type="evidence" value="ECO:0000314"/>
    <property type="project" value="MGI"/>
</dbReference>
<dbReference type="GO" id="GO:0005929">
    <property type="term" value="C:cilium"/>
    <property type="evidence" value="ECO:0000266"/>
    <property type="project" value="MGI"/>
</dbReference>
<dbReference type="GO" id="GO:0043231">
    <property type="term" value="C:intracellular membrane-bounded organelle"/>
    <property type="evidence" value="ECO:0007669"/>
    <property type="project" value="Ensembl"/>
</dbReference>
<dbReference type="GO" id="GO:0005886">
    <property type="term" value="C:plasma membrane"/>
    <property type="evidence" value="ECO:0000266"/>
    <property type="project" value="MGI"/>
</dbReference>
<dbReference type="GO" id="GO:0008528">
    <property type="term" value="F:G protein-coupled peptide receptor activity"/>
    <property type="evidence" value="ECO:0000314"/>
    <property type="project" value="MGI"/>
</dbReference>
<dbReference type="GO" id="GO:0004930">
    <property type="term" value="F:G protein-coupled receptor activity"/>
    <property type="evidence" value="ECO:0000266"/>
    <property type="project" value="MGI"/>
</dbReference>
<dbReference type="GO" id="GO:0008188">
    <property type="term" value="F:neuropeptide receptor activity"/>
    <property type="evidence" value="ECO:0007669"/>
    <property type="project" value="Ensembl"/>
</dbReference>
<dbReference type="GO" id="GO:0007165">
    <property type="term" value="P:signal transduction"/>
    <property type="evidence" value="ECO:0000314"/>
    <property type="project" value="MGI"/>
</dbReference>
<dbReference type="CDD" id="cd15095">
    <property type="entry name" value="7tmA_KiSS1R"/>
    <property type="match status" value="1"/>
</dbReference>
<dbReference type="FunFam" id="1.20.1070.10:FF:000171">
    <property type="entry name" value="KISS1 receptor b"/>
    <property type="match status" value="1"/>
</dbReference>
<dbReference type="Gene3D" id="1.20.1070.10">
    <property type="entry name" value="Rhodopsin 7-helix transmembrane proteins"/>
    <property type="match status" value="1"/>
</dbReference>
<dbReference type="InterPro" id="IPR000276">
    <property type="entry name" value="GPCR_Rhodpsn"/>
</dbReference>
<dbReference type="InterPro" id="IPR017452">
    <property type="entry name" value="GPCR_Rhodpsn_7TM"/>
</dbReference>
<dbReference type="InterPro" id="IPR008103">
    <property type="entry name" value="KiSS_1_rcpt"/>
</dbReference>
<dbReference type="PANTHER" id="PTHR45695:SF23">
    <property type="entry name" value="GALANIN-LIKE G-PROTEIN COUPLED RECEPTOR NPR-9"/>
    <property type="match status" value="1"/>
</dbReference>
<dbReference type="PANTHER" id="PTHR45695">
    <property type="entry name" value="LEUCOKININ RECEPTOR-RELATED"/>
    <property type="match status" value="1"/>
</dbReference>
<dbReference type="Pfam" id="PF00001">
    <property type="entry name" value="7tm_1"/>
    <property type="match status" value="1"/>
</dbReference>
<dbReference type="PRINTS" id="PR00237">
    <property type="entry name" value="GPCRRHODOPSN"/>
</dbReference>
<dbReference type="PRINTS" id="PR01728">
    <property type="entry name" value="KISS1RECEPTR"/>
</dbReference>
<dbReference type="SUPFAM" id="SSF81321">
    <property type="entry name" value="Family A G protein-coupled receptor-like"/>
    <property type="match status" value="1"/>
</dbReference>
<dbReference type="PROSITE" id="PS50262">
    <property type="entry name" value="G_PROTEIN_RECEP_F1_2"/>
    <property type="match status" value="1"/>
</dbReference>
<accession>Q91V45</accession>
<accession>Q8K3P2</accession>
<evidence type="ECO:0000255" key="1"/>
<evidence type="ECO:0000255" key="2">
    <source>
        <dbReference type="PROSITE-ProRule" id="PRU00521"/>
    </source>
</evidence>
<evidence type="ECO:0000256" key="3">
    <source>
        <dbReference type="SAM" id="MobiDB-lite"/>
    </source>
</evidence>
<evidence type="ECO:0000269" key="4">
    <source>
    </source>
</evidence>
<evidence type="ECO:0000269" key="5">
    <source>
    </source>
</evidence>
<evidence type="ECO:0000269" key="6">
    <source>
    </source>
</evidence>
<evidence type="ECO:0000305" key="7"/>
<reference key="1">
    <citation type="journal article" date="2001" name="Biochem. Biophys. Res. Commun.">
        <title>FMRFamide-related neuropeptides are agonists of the orphan G-protein-coupled receptor GPR54.</title>
        <authorList>
            <person name="Clements M.K."/>
            <person name="McDonald T.P."/>
            <person name="Wang R."/>
            <person name="Xie G."/>
            <person name="O'Dowd B.F."/>
            <person name="George S.R."/>
            <person name="Austin C.P."/>
            <person name="Liu Q."/>
        </authorList>
    </citation>
    <scope>NUCLEOTIDE SEQUENCE [MRNA]</scope>
    <scope>TISSUE SPECIFICITY</scope>
</reference>
<reference key="2">
    <citation type="journal article" date="2002" name="Cancer Res.">
        <title>Identification and characterization of mouse metastasis-suppressor KiSS1 and its G-protein-coupled receptor.</title>
        <authorList>
            <person name="Stafford L.J."/>
            <person name="Xia C."/>
            <person name="Ma W."/>
            <person name="Cai Y."/>
            <person name="Liu M."/>
        </authorList>
    </citation>
    <scope>NUCLEOTIDE SEQUENCE [MRNA]</scope>
    <scope>CHARACTERIZATION</scope>
    <scope>TISSUE SPECIFICITY</scope>
    <source>
        <strain>C57BL/6J</strain>
        <tissue>Brain</tissue>
    </source>
</reference>
<reference key="3">
    <citation type="journal article" date="2005" name="Science">
        <title>The transcriptional landscape of the mammalian genome.</title>
        <authorList>
            <person name="Carninci P."/>
            <person name="Kasukawa T."/>
            <person name="Katayama S."/>
            <person name="Gough J."/>
            <person name="Frith M.C."/>
            <person name="Maeda N."/>
            <person name="Oyama R."/>
            <person name="Ravasi T."/>
            <person name="Lenhard B."/>
            <person name="Wells C."/>
            <person name="Kodzius R."/>
            <person name="Shimokawa K."/>
            <person name="Bajic V.B."/>
            <person name="Brenner S.E."/>
            <person name="Batalov S."/>
            <person name="Forrest A.R."/>
            <person name="Zavolan M."/>
            <person name="Davis M.J."/>
            <person name="Wilming L.G."/>
            <person name="Aidinis V."/>
            <person name="Allen J.E."/>
            <person name="Ambesi-Impiombato A."/>
            <person name="Apweiler R."/>
            <person name="Aturaliya R.N."/>
            <person name="Bailey T.L."/>
            <person name="Bansal M."/>
            <person name="Baxter L."/>
            <person name="Beisel K.W."/>
            <person name="Bersano T."/>
            <person name="Bono H."/>
            <person name="Chalk A.M."/>
            <person name="Chiu K.P."/>
            <person name="Choudhary V."/>
            <person name="Christoffels A."/>
            <person name="Clutterbuck D.R."/>
            <person name="Crowe M.L."/>
            <person name="Dalla E."/>
            <person name="Dalrymple B.P."/>
            <person name="de Bono B."/>
            <person name="Della Gatta G."/>
            <person name="di Bernardo D."/>
            <person name="Down T."/>
            <person name="Engstrom P."/>
            <person name="Fagiolini M."/>
            <person name="Faulkner G."/>
            <person name="Fletcher C.F."/>
            <person name="Fukushima T."/>
            <person name="Furuno M."/>
            <person name="Futaki S."/>
            <person name="Gariboldi M."/>
            <person name="Georgii-Hemming P."/>
            <person name="Gingeras T.R."/>
            <person name="Gojobori T."/>
            <person name="Green R.E."/>
            <person name="Gustincich S."/>
            <person name="Harbers M."/>
            <person name="Hayashi Y."/>
            <person name="Hensch T.K."/>
            <person name="Hirokawa N."/>
            <person name="Hill D."/>
            <person name="Huminiecki L."/>
            <person name="Iacono M."/>
            <person name="Ikeo K."/>
            <person name="Iwama A."/>
            <person name="Ishikawa T."/>
            <person name="Jakt M."/>
            <person name="Kanapin A."/>
            <person name="Katoh M."/>
            <person name="Kawasawa Y."/>
            <person name="Kelso J."/>
            <person name="Kitamura H."/>
            <person name="Kitano H."/>
            <person name="Kollias G."/>
            <person name="Krishnan S.P."/>
            <person name="Kruger A."/>
            <person name="Kummerfeld S.K."/>
            <person name="Kurochkin I.V."/>
            <person name="Lareau L.F."/>
            <person name="Lazarevic D."/>
            <person name="Lipovich L."/>
            <person name="Liu J."/>
            <person name="Liuni S."/>
            <person name="McWilliam S."/>
            <person name="Madan Babu M."/>
            <person name="Madera M."/>
            <person name="Marchionni L."/>
            <person name="Matsuda H."/>
            <person name="Matsuzawa S."/>
            <person name="Miki H."/>
            <person name="Mignone F."/>
            <person name="Miyake S."/>
            <person name="Morris K."/>
            <person name="Mottagui-Tabar S."/>
            <person name="Mulder N."/>
            <person name="Nakano N."/>
            <person name="Nakauchi H."/>
            <person name="Ng P."/>
            <person name="Nilsson R."/>
            <person name="Nishiguchi S."/>
            <person name="Nishikawa S."/>
            <person name="Nori F."/>
            <person name="Ohara O."/>
            <person name="Okazaki Y."/>
            <person name="Orlando V."/>
            <person name="Pang K.C."/>
            <person name="Pavan W.J."/>
            <person name="Pavesi G."/>
            <person name="Pesole G."/>
            <person name="Petrovsky N."/>
            <person name="Piazza S."/>
            <person name="Reed J."/>
            <person name="Reid J.F."/>
            <person name="Ring B.Z."/>
            <person name="Ringwald M."/>
            <person name="Rost B."/>
            <person name="Ruan Y."/>
            <person name="Salzberg S.L."/>
            <person name="Sandelin A."/>
            <person name="Schneider C."/>
            <person name="Schoenbach C."/>
            <person name="Sekiguchi K."/>
            <person name="Semple C.A."/>
            <person name="Seno S."/>
            <person name="Sessa L."/>
            <person name="Sheng Y."/>
            <person name="Shibata Y."/>
            <person name="Shimada H."/>
            <person name="Shimada K."/>
            <person name="Silva D."/>
            <person name="Sinclair B."/>
            <person name="Sperling S."/>
            <person name="Stupka E."/>
            <person name="Sugiura K."/>
            <person name="Sultana R."/>
            <person name="Takenaka Y."/>
            <person name="Taki K."/>
            <person name="Tammoja K."/>
            <person name="Tan S.L."/>
            <person name="Tang S."/>
            <person name="Taylor M.S."/>
            <person name="Tegner J."/>
            <person name="Teichmann S.A."/>
            <person name="Ueda H.R."/>
            <person name="van Nimwegen E."/>
            <person name="Verardo R."/>
            <person name="Wei C.L."/>
            <person name="Yagi K."/>
            <person name="Yamanishi H."/>
            <person name="Zabarovsky E."/>
            <person name="Zhu S."/>
            <person name="Zimmer A."/>
            <person name="Hide W."/>
            <person name="Bult C."/>
            <person name="Grimmond S.M."/>
            <person name="Teasdale R.D."/>
            <person name="Liu E.T."/>
            <person name="Brusic V."/>
            <person name="Quackenbush J."/>
            <person name="Wahlestedt C."/>
            <person name="Mattick J.S."/>
            <person name="Hume D.A."/>
            <person name="Kai C."/>
            <person name="Sasaki D."/>
            <person name="Tomaru Y."/>
            <person name="Fukuda S."/>
            <person name="Kanamori-Katayama M."/>
            <person name="Suzuki M."/>
            <person name="Aoki J."/>
            <person name="Arakawa T."/>
            <person name="Iida J."/>
            <person name="Imamura K."/>
            <person name="Itoh M."/>
            <person name="Kato T."/>
            <person name="Kawaji H."/>
            <person name="Kawagashira N."/>
            <person name="Kawashima T."/>
            <person name="Kojima M."/>
            <person name="Kondo S."/>
            <person name="Konno H."/>
            <person name="Nakano K."/>
            <person name="Ninomiya N."/>
            <person name="Nishio T."/>
            <person name="Okada M."/>
            <person name="Plessy C."/>
            <person name="Shibata K."/>
            <person name="Shiraki T."/>
            <person name="Suzuki S."/>
            <person name="Tagami M."/>
            <person name="Waki K."/>
            <person name="Watahiki A."/>
            <person name="Okamura-Oho Y."/>
            <person name="Suzuki H."/>
            <person name="Kawai J."/>
            <person name="Hayashizaki Y."/>
        </authorList>
    </citation>
    <scope>NUCLEOTIDE SEQUENCE [LARGE SCALE MRNA]</scope>
    <source>
        <strain>C57BL/6J</strain>
        <tissue>Spinal cord</tissue>
    </source>
</reference>
<reference key="4">
    <citation type="journal article" date="2004" name="Genome Res.">
        <title>The status, quality, and expansion of the NIH full-length cDNA project: the Mammalian Gene Collection (MGC).</title>
        <authorList>
            <consortium name="The MGC Project Team"/>
        </authorList>
    </citation>
    <scope>NUCLEOTIDE SEQUENCE [LARGE SCALE MRNA]</scope>
    <source>
        <strain>C57BL/6J</strain>
        <strain>FVB/N</strain>
        <tissue>Mammary tumor</tissue>
    </source>
</reference>
<reference key="5">
    <citation type="journal article" date="2004" name="Trends Endocrinol. Metab.">
        <title>GPR54 and puberty.</title>
        <authorList>
            <person name="Colledge W.H."/>
        </authorList>
    </citation>
    <scope>REVIEW</scope>
</reference>
<reference key="6">
    <citation type="journal article" date="2003" name="Biochem. Biophys. Res. Commun.">
        <title>The KiSS-1 receptor GPR54 is essential for the development of the murine reproductive system.</title>
        <authorList>
            <person name="Funes S."/>
            <person name="Hedrick J.A."/>
            <person name="Vassileva G."/>
            <person name="Markowitz L."/>
            <person name="Abbondanzo S."/>
            <person name="Golovko A."/>
            <person name="Yang S."/>
            <person name="Monsma F.J."/>
            <person name="Gustafson E.L."/>
        </authorList>
    </citation>
    <scope>INVOLVEMENT IN SEXUAL DEVELOPMENT</scope>
</reference>
<reference key="7">
    <citation type="journal article" date="2003" name="N. Engl. J. Med.">
        <title>The GPR54 gene as a regulator of puberty.</title>
        <authorList>
            <person name="Seminara S.B."/>
            <person name="Messager S."/>
            <person name="Chatzidaki E.E."/>
            <person name="Thresher R.R."/>
            <person name="Acierno J.S. Jr."/>
            <person name="Shagoury J.K."/>
            <person name="Bo-Abbas Y."/>
            <person name="Kuohung W."/>
            <person name="Schwinof K.M."/>
            <person name="Hendrick A.G."/>
            <person name="Zahn D."/>
            <person name="Dixon J."/>
            <person name="Kaiser U.B."/>
            <person name="Slaugenhaupt S.A."/>
            <person name="Gusella J.F."/>
            <person name="O'Rahilly S."/>
            <person name="Carlton M.B.L."/>
            <person name="Crowley W.F. Jr."/>
            <person name="Aparicio S.A.J.R."/>
            <person name="Colledge W.H."/>
        </authorList>
    </citation>
    <scope>INVOLVEMENT IN SEXUAL DEVELOPMENT</scope>
</reference>
<reference key="8">
    <citation type="journal article" date="2005" name="Proc. Natl. Acad. Sci. U.S.A.">
        <title>Kisspeptin directly stimulates gonadotropin-releasing hormone release via G protein-coupled receptor 54.</title>
        <authorList>
            <person name="Messager S."/>
            <person name="Chatzidaki E.E."/>
            <person name="Ma D."/>
            <person name="Hendrick A.G."/>
            <person name="Zahn D."/>
            <person name="Dixon J."/>
            <person name="Thresher R.R."/>
            <person name="Malinge I."/>
            <person name="Lomet D."/>
            <person name="Carlton M.B."/>
            <person name="Colledge W.H."/>
            <person name="Caraty A."/>
            <person name="Aparicio S.A.J.R."/>
        </authorList>
    </citation>
    <scope>TISSUE SPECIFICITY</scope>
    <scope>DIRECT STIMULATION OF GONADOTROPIN-RELEASING HORMONE RELEASE</scope>
</reference>
<organism>
    <name type="scientific">Mus musculus</name>
    <name type="common">Mouse</name>
    <dbReference type="NCBI Taxonomy" id="10090"/>
    <lineage>
        <taxon>Eukaryota</taxon>
        <taxon>Metazoa</taxon>
        <taxon>Chordata</taxon>
        <taxon>Craniata</taxon>
        <taxon>Vertebrata</taxon>
        <taxon>Euteleostomi</taxon>
        <taxon>Mammalia</taxon>
        <taxon>Eutheria</taxon>
        <taxon>Euarchontoglires</taxon>
        <taxon>Glires</taxon>
        <taxon>Rodentia</taxon>
        <taxon>Myomorpha</taxon>
        <taxon>Muroidea</taxon>
        <taxon>Muridae</taxon>
        <taxon>Murinae</taxon>
        <taxon>Mus</taxon>
        <taxon>Mus</taxon>
    </lineage>
</organism>
<sequence length="396" mass="43061">MATEATLAPNVTWWAPSNASGCPGCGVNASDDPGSAPRPLDAWLVPLFFATLMLLGLVGNSLVIYVICRHKHMQTVTNFYIANLAATDVTFLLCCVPFTALLYPLPAWVLGDFMCKFVNYIQQVSVQATCATLTAMSVDRWYVTVFPLRALHRRTPRLALAVSLSIWVGSAAVSAPVLALHRLSPGPRTYCSEAFPSRALERAFALYNLLALYLLPLLATCACYGAMLRHLGRAAVRPAPTDGALQGQLLAQRAGAVRTKVSRLVAAVVLLFAACWGPIQLFLVLQALGPSGAWHPRSYAAYAVKIWAHCMSYSNSALNPLLYAFLGSHFRQAFCRVCPCCRQRQRRPHTSAHSDRAATHTVPHSRAAHPVRIRSPEPGNPVVRSPCAQSERTASL</sequence>
<gene>
    <name type="primary">Kiss1r</name>
    <name type="synonym">Gpr54</name>
</gene>
<comment type="function">
    <text>Receptor for metastin (kisspeptin-52 or kp-52), a C-terminally amidated peptide of KiSS1. KiSS1 is a metastasis suppressor protein. Activation of the receptor inhibits cell proliferation and cell migration, key characteristics of tumor metastasis. The receptor is essential for normal gonadotropin-released hormone physiology and for puberty. The hypothalamic KiSS1/KISS1R system is a pivotal factor in central regulation of the gonadotropic axis at puberty and in adulthood. Analysis of the transduction pathways activated by the receptor identifies coupling to phospholipase C and intracellular calcium release through pertussis toxin-insensitive G(q) proteins.</text>
</comment>
<comment type="subcellular location">
    <subcellularLocation>
        <location>Cell membrane</location>
        <topology>Multi-pass membrane protein</topology>
    </subcellularLocation>
</comment>
<comment type="tissue specificity">
    <text evidence="4 5 6">Highest level in the heart and 15- and 17-day embryos. Low level in other tissues. Colocalized with gonadotropin-releasing hormone (GnRH) neurons in the hypothalamus.</text>
</comment>
<comment type="similarity">
    <text evidence="2">Belongs to the G-protein coupled receptor 1 family.</text>
</comment>
<name>KISSR_MOUSE</name>
<proteinExistence type="evidence at protein level"/>
<feature type="chain" id="PRO_0000069696" description="KiSS-1 receptor">
    <location>
        <begin position="1"/>
        <end position="396"/>
    </location>
</feature>
<feature type="topological domain" description="Extracellular" evidence="1">
    <location>
        <begin position="1"/>
        <end position="43"/>
    </location>
</feature>
<feature type="transmembrane region" description="Helical; Name=1" evidence="1">
    <location>
        <begin position="44"/>
        <end position="66"/>
    </location>
</feature>
<feature type="topological domain" description="Cytoplasmic" evidence="1">
    <location>
        <begin position="67"/>
        <end position="78"/>
    </location>
</feature>
<feature type="transmembrane region" description="Helical; Name=2" evidence="1">
    <location>
        <begin position="79"/>
        <end position="101"/>
    </location>
</feature>
<feature type="topological domain" description="Extracellular" evidence="1">
    <location>
        <begin position="102"/>
        <end position="116"/>
    </location>
</feature>
<feature type="transmembrane region" description="Helical; Name=3" evidence="1">
    <location>
        <begin position="117"/>
        <end position="138"/>
    </location>
</feature>
<feature type="topological domain" description="Cytoplasmic" evidence="1">
    <location>
        <begin position="139"/>
        <end position="157"/>
    </location>
</feature>
<feature type="transmembrane region" description="Helical; Name=4" evidence="1">
    <location>
        <begin position="158"/>
        <end position="180"/>
    </location>
</feature>
<feature type="topological domain" description="Extracellular" evidence="1">
    <location>
        <begin position="181"/>
        <end position="203"/>
    </location>
</feature>
<feature type="transmembrane region" description="Helical; Name=5" evidence="1">
    <location>
        <begin position="204"/>
        <end position="224"/>
    </location>
</feature>
<feature type="topological domain" description="Cytoplasmic" evidence="1">
    <location>
        <begin position="225"/>
        <end position="260"/>
    </location>
</feature>
<feature type="transmembrane region" description="Helical; Name=6" evidence="1">
    <location>
        <begin position="261"/>
        <end position="283"/>
    </location>
</feature>
<feature type="topological domain" description="Extracellular" evidence="1">
    <location>
        <begin position="284"/>
        <end position="305"/>
    </location>
</feature>
<feature type="transmembrane region" description="Helical; Name=7" evidence="1">
    <location>
        <begin position="306"/>
        <end position="330"/>
    </location>
</feature>
<feature type="topological domain" description="Cytoplasmic" evidence="1">
    <location>
        <begin position="331"/>
        <end position="396"/>
    </location>
</feature>
<feature type="region of interest" description="Disordered" evidence="3">
    <location>
        <begin position="349"/>
        <end position="396"/>
    </location>
</feature>
<feature type="compositionally biased region" description="Polar residues" evidence="3">
    <location>
        <begin position="387"/>
        <end position="396"/>
    </location>
</feature>
<feature type="glycosylation site" description="N-linked (GlcNAc...) asparagine" evidence="1">
    <location>
        <position position="10"/>
    </location>
</feature>
<feature type="glycosylation site" description="N-linked (GlcNAc...) asparagine" evidence="1">
    <location>
        <position position="18"/>
    </location>
</feature>
<feature type="glycosylation site" description="N-linked (GlcNAc...) asparagine" evidence="1">
    <location>
        <position position="28"/>
    </location>
</feature>
<feature type="disulfide bond" evidence="2">
    <location>
        <begin position="115"/>
        <end position="191"/>
    </location>
</feature>
<feature type="sequence conflict" description="In Ref. 2; AAK95814." evidence="7" ref="2">
    <location>
        <position position="82"/>
    </location>
</feature>
<protein>
    <recommendedName>
        <fullName>KiSS-1 receptor</fullName>
        <shortName>KiSS-1R</shortName>
    </recommendedName>
    <alternativeName>
        <fullName>G-protein coupled receptor 54</fullName>
    </alternativeName>
    <alternativeName>
        <fullName>G-protein coupled receptor OT7T175</fullName>
        <shortName>mOT7T175</shortName>
    </alternativeName>
    <alternativeName>
        <fullName>Kisspeptins receptor</fullName>
    </alternativeName>
    <alternativeName>
        <fullName>Metastin receptor</fullName>
    </alternativeName>
</protein>
<keyword id="KW-1003">Cell membrane</keyword>
<keyword id="KW-1015">Disulfide bond</keyword>
<keyword id="KW-0297">G-protein coupled receptor</keyword>
<keyword id="KW-0325">Glycoprotein</keyword>
<keyword id="KW-0472">Membrane</keyword>
<keyword id="KW-0675">Receptor</keyword>
<keyword id="KW-1185">Reference proteome</keyword>
<keyword id="KW-0807">Transducer</keyword>
<keyword id="KW-0812">Transmembrane</keyword>
<keyword id="KW-1133">Transmembrane helix</keyword>